<accession>Q211C4</accession>
<keyword id="KW-0488">Methylation</keyword>
<keyword id="KW-0687">Ribonucleoprotein</keyword>
<keyword id="KW-0689">Ribosomal protein</keyword>
<keyword id="KW-0694">RNA-binding</keyword>
<keyword id="KW-0699">rRNA-binding</keyword>
<organism>
    <name type="scientific">Rhodopseudomonas palustris (strain BisB18)</name>
    <dbReference type="NCBI Taxonomy" id="316056"/>
    <lineage>
        <taxon>Bacteria</taxon>
        <taxon>Pseudomonadati</taxon>
        <taxon>Pseudomonadota</taxon>
        <taxon>Alphaproteobacteria</taxon>
        <taxon>Hyphomicrobiales</taxon>
        <taxon>Nitrobacteraceae</taxon>
        <taxon>Rhodopseudomonas</taxon>
    </lineage>
</organism>
<name>RL11_RHOPB</name>
<dbReference type="EMBL" id="CP000301">
    <property type="protein sequence ID" value="ABD89012.1"/>
    <property type="molecule type" value="Genomic_DNA"/>
</dbReference>
<dbReference type="SMR" id="Q211C4"/>
<dbReference type="STRING" id="316056.RPC_3472"/>
<dbReference type="KEGG" id="rpc:RPC_3472"/>
<dbReference type="eggNOG" id="COG0080">
    <property type="taxonomic scope" value="Bacteria"/>
</dbReference>
<dbReference type="HOGENOM" id="CLU_074237_2_0_5"/>
<dbReference type="OrthoDB" id="9802408at2"/>
<dbReference type="GO" id="GO:0022625">
    <property type="term" value="C:cytosolic large ribosomal subunit"/>
    <property type="evidence" value="ECO:0007669"/>
    <property type="project" value="TreeGrafter"/>
</dbReference>
<dbReference type="GO" id="GO:0070180">
    <property type="term" value="F:large ribosomal subunit rRNA binding"/>
    <property type="evidence" value="ECO:0007669"/>
    <property type="project" value="UniProtKB-UniRule"/>
</dbReference>
<dbReference type="GO" id="GO:0003735">
    <property type="term" value="F:structural constituent of ribosome"/>
    <property type="evidence" value="ECO:0007669"/>
    <property type="project" value="InterPro"/>
</dbReference>
<dbReference type="GO" id="GO:0006412">
    <property type="term" value="P:translation"/>
    <property type="evidence" value="ECO:0007669"/>
    <property type="project" value="UniProtKB-UniRule"/>
</dbReference>
<dbReference type="CDD" id="cd00349">
    <property type="entry name" value="Ribosomal_L11"/>
    <property type="match status" value="1"/>
</dbReference>
<dbReference type="FunFam" id="1.10.10.250:FF:000001">
    <property type="entry name" value="50S ribosomal protein L11"/>
    <property type="match status" value="1"/>
</dbReference>
<dbReference type="FunFam" id="3.30.1550.10:FF:000001">
    <property type="entry name" value="50S ribosomal protein L11"/>
    <property type="match status" value="1"/>
</dbReference>
<dbReference type="Gene3D" id="1.10.10.250">
    <property type="entry name" value="Ribosomal protein L11, C-terminal domain"/>
    <property type="match status" value="1"/>
</dbReference>
<dbReference type="Gene3D" id="3.30.1550.10">
    <property type="entry name" value="Ribosomal protein L11/L12, N-terminal domain"/>
    <property type="match status" value="1"/>
</dbReference>
<dbReference type="HAMAP" id="MF_00736">
    <property type="entry name" value="Ribosomal_uL11"/>
    <property type="match status" value="1"/>
</dbReference>
<dbReference type="InterPro" id="IPR000911">
    <property type="entry name" value="Ribosomal_uL11"/>
</dbReference>
<dbReference type="InterPro" id="IPR006519">
    <property type="entry name" value="Ribosomal_uL11_bac-typ"/>
</dbReference>
<dbReference type="InterPro" id="IPR020783">
    <property type="entry name" value="Ribosomal_uL11_C"/>
</dbReference>
<dbReference type="InterPro" id="IPR036769">
    <property type="entry name" value="Ribosomal_uL11_C_sf"/>
</dbReference>
<dbReference type="InterPro" id="IPR020785">
    <property type="entry name" value="Ribosomal_uL11_CS"/>
</dbReference>
<dbReference type="InterPro" id="IPR020784">
    <property type="entry name" value="Ribosomal_uL11_N"/>
</dbReference>
<dbReference type="InterPro" id="IPR036796">
    <property type="entry name" value="Ribosomal_uL11_N_sf"/>
</dbReference>
<dbReference type="NCBIfam" id="TIGR01632">
    <property type="entry name" value="L11_bact"/>
    <property type="match status" value="1"/>
</dbReference>
<dbReference type="PANTHER" id="PTHR11661">
    <property type="entry name" value="60S RIBOSOMAL PROTEIN L12"/>
    <property type="match status" value="1"/>
</dbReference>
<dbReference type="PANTHER" id="PTHR11661:SF1">
    <property type="entry name" value="LARGE RIBOSOMAL SUBUNIT PROTEIN UL11M"/>
    <property type="match status" value="1"/>
</dbReference>
<dbReference type="Pfam" id="PF00298">
    <property type="entry name" value="Ribosomal_L11"/>
    <property type="match status" value="1"/>
</dbReference>
<dbReference type="Pfam" id="PF03946">
    <property type="entry name" value="Ribosomal_L11_N"/>
    <property type="match status" value="1"/>
</dbReference>
<dbReference type="SMART" id="SM00649">
    <property type="entry name" value="RL11"/>
    <property type="match status" value="1"/>
</dbReference>
<dbReference type="SUPFAM" id="SSF54747">
    <property type="entry name" value="Ribosomal L11/L12e N-terminal domain"/>
    <property type="match status" value="1"/>
</dbReference>
<dbReference type="SUPFAM" id="SSF46906">
    <property type="entry name" value="Ribosomal protein L11, C-terminal domain"/>
    <property type="match status" value="1"/>
</dbReference>
<dbReference type="PROSITE" id="PS00359">
    <property type="entry name" value="RIBOSOMAL_L11"/>
    <property type="match status" value="1"/>
</dbReference>
<feature type="chain" id="PRO_0000258200" description="Large ribosomal subunit protein uL11">
    <location>
        <begin position="1"/>
        <end position="142"/>
    </location>
</feature>
<evidence type="ECO:0000255" key="1">
    <source>
        <dbReference type="HAMAP-Rule" id="MF_00736"/>
    </source>
</evidence>
<evidence type="ECO:0000305" key="2"/>
<gene>
    <name evidence="1" type="primary">rplK</name>
    <name type="ordered locus">RPC_3472</name>
</gene>
<comment type="function">
    <text evidence="1">Forms part of the ribosomal stalk which helps the ribosome interact with GTP-bound translation factors.</text>
</comment>
<comment type="subunit">
    <text evidence="1">Part of the ribosomal stalk of the 50S ribosomal subunit. Interacts with L10 and the large rRNA to form the base of the stalk. L10 forms an elongated spine to which L12 dimers bind in a sequential fashion forming a multimeric L10(L12)X complex.</text>
</comment>
<comment type="PTM">
    <text evidence="1">One or more lysine residues are methylated.</text>
</comment>
<comment type="similarity">
    <text evidence="1">Belongs to the universal ribosomal protein uL11 family.</text>
</comment>
<reference key="1">
    <citation type="submission" date="2006-03" db="EMBL/GenBank/DDBJ databases">
        <title>Complete sequence of Rhodopseudomonas palustris BisB18.</title>
        <authorList>
            <consortium name="US DOE Joint Genome Institute"/>
            <person name="Copeland A."/>
            <person name="Lucas S."/>
            <person name="Lapidus A."/>
            <person name="Barry K."/>
            <person name="Detter J.C."/>
            <person name="Glavina del Rio T."/>
            <person name="Hammon N."/>
            <person name="Israni S."/>
            <person name="Dalin E."/>
            <person name="Tice H."/>
            <person name="Pitluck S."/>
            <person name="Chain P."/>
            <person name="Malfatti S."/>
            <person name="Shin M."/>
            <person name="Vergez L."/>
            <person name="Schmutz J."/>
            <person name="Larimer F."/>
            <person name="Land M."/>
            <person name="Hauser L."/>
            <person name="Pelletier D.A."/>
            <person name="Kyrpides N."/>
            <person name="Anderson I."/>
            <person name="Oda Y."/>
            <person name="Harwood C.S."/>
            <person name="Richardson P."/>
        </authorList>
    </citation>
    <scope>NUCLEOTIDE SEQUENCE [LARGE SCALE GENOMIC DNA]</scope>
    <source>
        <strain>BisB18</strain>
    </source>
</reference>
<proteinExistence type="inferred from homology"/>
<sequence>MAKKVTGYLKLQVPAGAANPSPPIGPALGQRGLNIMEFCKAFNAQTQKEEKNTPIPVVITIYADRSFTFEMKTPPMSFFLKQAANVKSGSKLPGRDVAGKVTSAQVREIAERKMKDLNCDSIEAAMKMVEGSARSMGLQVAG</sequence>
<protein>
    <recommendedName>
        <fullName evidence="1">Large ribosomal subunit protein uL11</fullName>
    </recommendedName>
    <alternativeName>
        <fullName evidence="2">50S ribosomal protein L11</fullName>
    </alternativeName>
</protein>